<comment type="function">
    <text evidence="1">Part of a stress-induced multi-chaperone system, it is involved in the recovery of the cell from heat-induced damage, in cooperation with DnaK, DnaJ and GrpE. Acts before DnaK, in the processing of protein aggregates. Protein binding stimulates the ATPase activity; ATP hydrolysis unfolds the denatured protein aggregates, which probably helps expose new hydrophobic binding sites on the surface of ClpB-bound aggregates, contributing to the solubilization and refolding of denatured protein aggregates by DnaK (By similarity).</text>
</comment>
<comment type="subunit">
    <text evidence="1">Homohexamer. The oligomerization is ATP-dependent (By similarity).</text>
</comment>
<comment type="subcellular location">
    <subcellularLocation>
        <location evidence="3">Cytoplasm</location>
    </subcellularLocation>
</comment>
<comment type="induction">
    <text>By heat and acid shock.</text>
</comment>
<comment type="domain">
    <text evidence="1">The Clp repeat (R) domain probably functions as a substrate-discriminating domain, recruiting aggregated proteins to the ClpB hexamer and/or stabilizing bound proteins. The NBD2 domain is responsible for oligomerization, whereas the NBD1 domain stabilizes the hexamer probably in an ATP-dependent manner. The movement of the coiled-coil domain is essential for ClpB ability to rescue proteins from an aggregated state, probably by pulling apart large aggregated proteins, which are bound between the coiled-coils motifs of adjacent ClpB subunits in the functional hexamer (By similarity).</text>
</comment>
<comment type="similarity">
    <text evidence="3">Belongs to the ClpA/ClpB family.</text>
</comment>
<accession>Q7CEG6</accession>
<accession>G0K7T0</accession>
<accession>Q9AEM5</accession>
<dbReference type="EMBL" id="AJ251205">
    <property type="protein sequence ID" value="CAC36094.1"/>
    <property type="molecule type" value="Genomic_DNA"/>
</dbReference>
<dbReference type="EMBL" id="AE014291">
    <property type="protein sequence ID" value="AAN30759.1"/>
    <property type="molecule type" value="Genomic_DNA"/>
</dbReference>
<dbReference type="EMBL" id="CP002997">
    <property type="protein sequence ID" value="AEM19176.1"/>
    <property type="molecule type" value="Genomic_DNA"/>
</dbReference>
<dbReference type="RefSeq" id="WP_006190898.1">
    <property type="nucleotide sequence ID" value="NZ_KN046804.1"/>
</dbReference>
<dbReference type="SMR" id="Q7CEG6"/>
<dbReference type="GeneID" id="45052820"/>
<dbReference type="KEGG" id="bms:BR1864"/>
<dbReference type="KEGG" id="bsi:BS1330_I1858"/>
<dbReference type="PATRIC" id="fig|204722.22.peg.2148"/>
<dbReference type="HOGENOM" id="CLU_005070_4_0_5"/>
<dbReference type="PhylomeDB" id="Q7CEG6"/>
<dbReference type="PRO" id="PR:Q7CEG6"/>
<dbReference type="Proteomes" id="UP000007104">
    <property type="component" value="Chromosome I"/>
</dbReference>
<dbReference type="GO" id="GO:0005737">
    <property type="term" value="C:cytoplasm"/>
    <property type="evidence" value="ECO:0007669"/>
    <property type="project" value="UniProtKB-SubCell"/>
</dbReference>
<dbReference type="GO" id="GO:0005524">
    <property type="term" value="F:ATP binding"/>
    <property type="evidence" value="ECO:0007669"/>
    <property type="project" value="UniProtKB-KW"/>
</dbReference>
<dbReference type="GO" id="GO:0016887">
    <property type="term" value="F:ATP hydrolysis activity"/>
    <property type="evidence" value="ECO:0007669"/>
    <property type="project" value="InterPro"/>
</dbReference>
<dbReference type="GO" id="GO:0034605">
    <property type="term" value="P:cellular response to heat"/>
    <property type="evidence" value="ECO:0007669"/>
    <property type="project" value="TreeGrafter"/>
</dbReference>
<dbReference type="GO" id="GO:0042026">
    <property type="term" value="P:protein refolding"/>
    <property type="evidence" value="ECO:0007669"/>
    <property type="project" value="InterPro"/>
</dbReference>
<dbReference type="CDD" id="cd00009">
    <property type="entry name" value="AAA"/>
    <property type="match status" value="1"/>
</dbReference>
<dbReference type="CDD" id="cd19499">
    <property type="entry name" value="RecA-like_ClpB_Hsp104-like"/>
    <property type="match status" value="1"/>
</dbReference>
<dbReference type="FunFam" id="3.40.50.300:FF:000120">
    <property type="entry name" value="ATP-dependent chaperone ClpB"/>
    <property type="match status" value="1"/>
</dbReference>
<dbReference type="FunFam" id="3.40.50.300:FF:000025">
    <property type="entry name" value="ATP-dependent Clp protease subunit"/>
    <property type="match status" value="1"/>
</dbReference>
<dbReference type="FunFam" id="3.40.50.300:FF:000010">
    <property type="entry name" value="Chaperone clpB 1, putative"/>
    <property type="match status" value="1"/>
</dbReference>
<dbReference type="Gene3D" id="1.10.8.60">
    <property type="match status" value="1"/>
</dbReference>
<dbReference type="Gene3D" id="1.10.1780.10">
    <property type="entry name" value="Clp, N-terminal domain"/>
    <property type="match status" value="1"/>
</dbReference>
<dbReference type="Gene3D" id="3.40.50.300">
    <property type="entry name" value="P-loop containing nucleotide triphosphate hydrolases"/>
    <property type="match status" value="3"/>
</dbReference>
<dbReference type="InterPro" id="IPR003593">
    <property type="entry name" value="AAA+_ATPase"/>
</dbReference>
<dbReference type="InterPro" id="IPR003959">
    <property type="entry name" value="ATPase_AAA_core"/>
</dbReference>
<dbReference type="InterPro" id="IPR017730">
    <property type="entry name" value="Chaperonin_ClpB"/>
</dbReference>
<dbReference type="InterPro" id="IPR019489">
    <property type="entry name" value="Clp_ATPase_C"/>
</dbReference>
<dbReference type="InterPro" id="IPR036628">
    <property type="entry name" value="Clp_N_dom_sf"/>
</dbReference>
<dbReference type="InterPro" id="IPR004176">
    <property type="entry name" value="Clp_R_dom"/>
</dbReference>
<dbReference type="InterPro" id="IPR001270">
    <property type="entry name" value="ClpA/B"/>
</dbReference>
<dbReference type="InterPro" id="IPR018368">
    <property type="entry name" value="ClpA/B_CS1"/>
</dbReference>
<dbReference type="InterPro" id="IPR028299">
    <property type="entry name" value="ClpA/B_CS2"/>
</dbReference>
<dbReference type="InterPro" id="IPR041546">
    <property type="entry name" value="ClpA/ClpB_AAA_lid"/>
</dbReference>
<dbReference type="InterPro" id="IPR050130">
    <property type="entry name" value="ClpA_ClpB"/>
</dbReference>
<dbReference type="InterPro" id="IPR027417">
    <property type="entry name" value="P-loop_NTPase"/>
</dbReference>
<dbReference type="NCBIfam" id="TIGR03346">
    <property type="entry name" value="chaperone_ClpB"/>
    <property type="match status" value="1"/>
</dbReference>
<dbReference type="PANTHER" id="PTHR11638">
    <property type="entry name" value="ATP-DEPENDENT CLP PROTEASE"/>
    <property type="match status" value="1"/>
</dbReference>
<dbReference type="PANTHER" id="PTHR11638:SF18">
    <property type="entry name" value="HEAT SHOCK PROTEIN 104"/>
    <property type="match status" value="1"/>
</dbReference>
<dbReference type="Pfam" id="PF00004">
    <property type="entry name" value="AAA"/>
    <property type="match status" value="1"/>
</dbReference>
<dbReference type="Pfam" id="PF07724">
    <property type="entry name" value="AAA_2"/>
    <property type="match status" value="1"/>
</dbReference>
<dbReference type="Pfam" id="PF17871">
    <property type="entry name" value="AAA_lid_9"/>
    <property type="match status" value="1"/>
</dbReference>
<dbReference type="Pfam" id="PF02861">
    <property type="entry name" value="Clp_N"/>
    <property type="match status" value="2"/>
</dbReference>
<dbReference type="Pfam" id="PF10431">
    <property type="entry name" value="ClpB_D2-small"/>
    <property type="match status" value="1"/>
</dbReference>
<dbReference type="PRINTS" id="PR00300">
    <property type="entry name" value="CLPPROTEASEA"/>
</dbReference>
<dbReference type="SMART" id="SM00382">
    <property type="entry name" value="AAA"/>
    <property type="match status" value="2"/>
</dbReference>
<dbReference type="SMART" id="SM01086">
    <property type="entry name" value="ClpB_D2-small"/>
    <property type="match status" value="1"/>
</dbReference>
<dbReference type="SUPFAM" id="SSF81923">
    <property type="entry name" value="Double Clp-N motif"/>
    <property type="match status" value="1"/>
</dbReference>
<dbReference type="SUPFAM" id="SSF52540">
    <property type="entry name" value="P-loop containing nucleoside triphosphate hydrolases"/>
    <property type="match status" value="2"/>
</dbReference>
<dbReference type="PROSITE" id="PS51903">
    <property type="entry name" value="CLP_R"/>
    <property type="match status" value="1"/>
</dbReference>
<dbReference type="PROSITE" id="PS00870">
    <property type="entry name" value="CLPAB_1"/>
    <property type="match status" value="1"/>
</dbReference>
<dbReference type="PROSITE" id="PS00871">
    <property type="entry name" value="CLPAB_2"/>
    <property type="match status" value="1"/>
</dbReference>
<evidence type="ECO:0000250" key="1"/>
<evidence type="ECO:0000255" key="2">
    <source>
        <dbReference type="PROSITE-ProRule" id="PRU01251"/>
    </source>
</evidence>
<evidence type="ECO:0000305" key="3"/>
<organism>
    <name type="scientific">Brucella suis biovar 1 (strain 1330)</name>
    <dbReference type="NCBI Taxonomy" id="204722"/>
    <lineage>
        <taxon>Bacteria</taxon>
        <taxon>Pseudomonadati</taxon>
        <taxon>Pseudomonadota</taxon>
        <taxon>Alphaproteobacteria</taxon>
        <taxon>Hyphomicrobiales</taxon>
        <taxon>Brucellaceae</taxon>
        <taxon>Brucella/Ochrobactrum group</taxon>
        <taxon>Brucella</taxon>
    </lineage>
</organism>
<name>CLPB_BRUSU</name>
<keyword id="KW-0067">ATP-binding</keyword>
<keyword id="KW-0143">Chaperone</keyword>
<keyword id="KW-0175">Coiled coil</keyword>
<keyword id="KW-0963">Cytoplasm</keyword>
<keyword id="KW-0547">Nucleotide-binding</keyword>
<keyword id="KW-0677">Repeat</keyword>
<keyword id="KW-0346">Stress response</keyword>
<gene>
    <name type="primary">clpB</name>
    <name type="ordered locus">BR1864</name>
    <name type="ordered locus">BS1330_I1858</name>
</gene>
<proteinExistence type="evidence at transcript level"/>
<protein>
    <recommendedName>
        <fullName>Chaperone protein ClpB</fullName>
    </recommendedName>
</protein>
<reference key="1">
    <citation type="journal article" date="2001" name="J. Bacteriol.">
        <title>Characterization of Brucella suis clpB and clpAB mutants and participation of the genes in stress responses.</title>
        <authorList>
            <person name="Ekaza E."/>
            <person name="Teyssier J."/>
            <person name="Ouahrani-Bettache S."/>
            <person name="Liautard J.-P."/>
            <person name="Koehler S."/>
        </authorList>
    </citation>
    <scope>NUCLEOTIDE SEQUENCE [GENOMIC DNA]</scope>
</reference>
<reference key="2">
    <citation type="journal article" date="2002" name="Proc. Natl. Acad. Sci. U.S.A.">
        <title>The Brucella suis genome reveals fundamental similarities between animal and plant pathogens and symbionts.</title>
        <authorList>
            <person name="Paulsen I.T."/>
            <person name="Seshadri R."/>
            <person name="Nelson K.E."/>
            <person name="Eisen J.A."/>
            <person name="Heidelberg J.F."/>
            <person name="Read T.D."/>
            <person name="Dodson R.J."/>
            <person name="Umayam L.A."/>
            <person name="Brinkac L.M."/>
            <person name="Beanan M.J."/>
            <person name="Daugherty S.C."/>
            <person name="DeBoy R.T."/>
            <person name="Durkin A.S."/>
            <person name="Kolonay J.F."/>
            <person name="Madupu R."/>
            <person name="Nelson W.C."/>
            <person name="Ayodeji B."/>
            <person name="Kraul M."/>
            <person name="Shetty J."/>
            <person name="Malek J.A."/>
            <person name="Van Aken S.E."/>
            <person name="Riedmuller S."/>
            <person name="Tettelin H."/>
            <person name="Gill S.R."/>
            <person name="White O."/>
            <person name="Salzberg S.L."/>
            <person name="Hoover D.L."/>
            <person name="Lindler L.E."/>
            <person name="Halling S.M."/>
            <person name="Boyle S.M."/>
            <person name="Fraser C.M."/>
        </authorList>
    </citation>
    <scope>NUCLEOTIDE SEQUENCE [LARGE SCALE GENOMIC DNA]</scope>
    <source>
        <strain>1330</strain>
    </source>
</reference>
<reference key="3">
    <citation type="journal article" date="2011" name="J. Bacteriol.">
        <title>Revised genome sequence of Brucella suis 1330.</title>
        <authorList>
            <person name="Tae H."/>
            <person name="Shallom S."/>
            <person name="Settlage R."/>
            <person name="Preston D."/>
            <person name="Adams L.G."/>
            <person name="Garner H.R."/>
        </authorList>
    </citation>
    <scope>NUCLEOTIDE SEQUENCE [LARGE SCALE GENOMIC DNA]</scope>
    <source>
        <strain>1330</strain>
    </source>
</reference>
<feature type="chain" id="PRO_0000191100" description="Chaperone protein ClpB">
    <location>
        <begin position="1"/>
        <end position="874"/>
    </location>
</feature>
<feature type="domain" description="Clp R" evidence="2">
    <location>
        <begin position="3"/>
        <end position="147"/>
    </location>
</feature>
<feature type="region of interest" description="Repeat 1" evidence="2">
    <location>
        <begin position="6"/>
        <end position="71"/>
    </location>
</feature>
<feature type="region of interest" description="Repeat 2" evidence="2">
    <location>
        <begin position="83"/>
        <end position="147"/>
    </location>
</feature>
<feature type="region of interest" description="NBD1" evidence="1">
    <location>
        <begin position="160"/>
        <end position="341"/>
    </location>
</feature>
<feature type="region of interest" description="Linker" evidence="1">
    <location>
        <begin position="342"/>
        <end position="545"/>
    </location>
</feature>
<feature type="region of interest" description="NBD2" evidence="1">
    <location>
        <begin position="555"/>
        <end position="765"/>
    </location>
</feature>
<feature type="region of interest" description="C-terminal" evidence="1">
    <location>
        <begin position="766"/>
        <end position="874"/>
    </location>
</feature>
<feature type="coiled-coil region" evidence="1">
    <location>
        <begin position="392"/>
        <end position="524"/>
    </location>
</feature>
<feature type="binding site" evidence="1">
    <location>
        <begin position="207"/>
        <end position="214"/>
    </location>
    <ligand>
        <name>ATP</name>
        <dbReference type="ChEBI" id="CHEBI:30616"/>
        <label>1</label>
    </ligand>
</feature>
<feature type="binding site" evidence="1">
    <location>
        <begin position="605"/>
        <end position="612"/>
    </location>
    <ligand>
        <name>ATP</name>
        <dbReference type="ChEBI" id="CHEBI:30616"/>
        <label>2</label>
    </ligand>
</feature>
<sequence length="874" mass="96906">MNIEKYTERVRGFIQSAQTFALSSGNQQFTPEHILKVLIDDDEGLAASLVERAGGRVGDVRMGLQSALEKLPKVSGGNDQLYLSQPLAKVFSLAEELASKAGDSFVTVERLLTALAMEKSAKTSEILSAAGVTPTALNRVINDMRKGRTADSASAESNYDALKKYARDLTEDARAGKLDPVIGRDEEIRRTIQVLSRRTKNNPVLIGEPGVGKTAIAEGLALRIVNGDVPESLKDKQLMALDMGALIAGAKYRGEFEERLKAVLSEVQTAAGQIILFIDEMHTLVGAGKTDGAMDASNLLKPALARGELHCVGATTLEEYRKYVEKDAALARRFQPVFVDEPTVEDTISILRGLKEKYEQHHKVRVSDSALVAAATLSNRYITDRFLPDKAIDLVDEAASRLRMHVDSKPEELDEIDRRIMQLKIEREALKVETDAASKDRLQRIEKELSDLEEESAELTAKWQAEKQKLGLAADLKRQLEEARNALAIAQRNGEFQKAGELAYGTIPQLEKQLADAESQENKGSLLEETVTPDHVAQVISRWTGIPVDRMLEGEREKLLRMEDEIGKRVVGQGEAVQAISKAVRRARAGLQDPNRPIGSFIFLGPTGVGKTELTKALASFLFQDDTAMVRIDMSEFMEKHSVSRLIGAPPGYVGYEEGGVLTEAVRRRPYQVILFDEIEKAHPDVFNVLLQVLDDGRLTDGQGRTVDFRNTVIIMTSNLGAEYLVNLGENDDVETVRDDVMGVVRASFRPEFLNRVDEIILFHRLRREDMGAIVDIQMQRLQYLLSDRKITLQLEDDAREWLANKGYDPAYGARPLKRVIQKEVQDPLAERILLGDILDGSLVKITAGSDRLNFRPISGAFSAAEPEREDEKA</sequence>